<evidence type="ECO:0000255" key="1">
    <source>
        <dbReference type="HAMAP-Rule" id="MF_00444"/>
    </source>
</evidence>
<dbReference type="EC" id="3.4.21.92" evidence="1"/>
<dbReference type="EMBL" id="CP000922">
    <property type="protein sequence ID" value="ACJ34877.1"/>
    <property type="molecule type" value="Genomic_DNA"/>
</dbReference>
<dbReference type="RefSeq" id="WP_004892507.1">
    <property type="nucleotide sequence ID" value="NC_011567.1"/>
</dbReference>
<dbReference type="SMR" id="B7GL34"/>
<dbReference type="STRING" id="491915.Aflv_2522"/>
<dbReference type="MEROPS" id="S14.001"/>
<dbReference type="GeneID" id="7038796"/>
<dbReference type="KEGG" id="afl:Aflv_2522"/>
<dbReference type="eggNOG" id="COG0740">
    <property type="taxonomic scope" value="Bacteria"/>
</dbReference>
<dbReference type="HOGENOM" id="CLU_058707_3_2_9"/>
<dbReference type="Proteomes" id="UP000000742">
    <property type="component" value="Chromosome"/>
</dbReference>
<dbReference type="GO" id="GO:0005737">
    <property type="term" value="C:cytoplasm"/>
    <property type="evidence" value="ECO:0007669"/>
    <property type="project" value="UniProtKB-SubCell"/>
</dbReference>
<dbReference type="GO" id="GO:0009368">
    <property type="term" value="C:endopeptidase Clp complex"/>
    <property type="evidence" value="ECO:0007669"/>
    <property type="project" value="TreeGrafter"/>
</dbReference>
<dbReference type="GO" id="GO:0004176">
    <property type="term" value="F:ATP-dependent peptidase activity"/>
    <property type="evidence" value="ECO:0007669"/>
    <property type="project" value="InterPro"/>
</dbReference>
<dbReference type="GO" id="GO:0051117">
    <property type="term" value="F:ATPase binding"/>
    <property type="evidence" value="ECO:0007669"/>
    <property type="project" value="TreeGrafter"/>
</dbReference>
<dbReference type="GO" id="GO:0004252">
    <property type="term" value="F:serine-type endopeptidase activity"/>
    <property type="evidence" value="ECO:0007669"/>
    <property type="project" value="UniProtKB-UniRule"/>
</dbReference>
<dbReference type="GO" id="GO:0006515">
    <property type="term" value="P:protein quality control for misfolded or incompletely synthesized proteins"/>
    <property type="evidence" value="ECO:0007669"/>
    <property type="project" value="TreeGrafter"/>
</dbReference>
<dbReference type="CDD" id="cd07017">
    <property type="entry name" value="S14_ClpP_2"/>
    <property type="match status" value="1"/>
</dbReference>
<dbReference type="FunFam" id="3.90.226.10:FF:000001">
    <property type="entry name" value="ATP-dependent Clp protease proteolytic subunit"/>
    <property type="match status" value="1"/>
</dbReference>
<dbReference type="Gene3D" id="3.90.226.10">
    <property type="entry name" value="2-enoyl-CoA Hydratase, Chain A, domain 1"/>
    <property type="match status" value="1"/>
</dbReference>
<dbReference type="HAMAP" id="MF_00444">
    <property type="entry name" value="ClpP"/>
    <property type="match status" value="1"/>
</dbReference>
<dbReference type="InterPro" id="IPR001907">
    <property type="entry name" value="ClpP"/>
</dbReference>
<dbReference type="InterPro" id="IPR029045">
    <property type="entry name" value="ClpP/crotonase-like_dom_sf"/>
</dbReference>
<dbReference type="InterPro" id="IPR023562">
    <property type="entry name" value="ClpP/TepA"/>
</dbReference>
<dbReference type="InterPro" id="IPR033135">
    <property type="entry name" value="ClpP_His_AS"/>
</dbReference>
<dbReference type="InterPro" id="IPR018215">
    <property type="entry name" value="ClpP_Ser_AS"/>
</dbReference>
<dbReference type="NCBIfam" id="TIGR00493">
    <property type="entry name" value="clpP"/>
    <property type="match status" value="1"/>
</dbReference>
<dbReference type="NCBIfam" id="NF001368">
    <property type="entry name" value="PRK00277.1"/>
    <property type="match status" value="1"/>
</dbReference>
<dbReference type="NCBIfam" id="NF009205">
    <property type="entry name" value="PRK12553.1"/>
    <property type="match status" value="1"/>
</dbReference>
<dbReference type="PANTHER" id="PTHR10381">
    <property type="entry name" value="ATP-DEPENDENT CLP PROTEASE PROTEOLYTIC SUBUNIT"/>
    <property type="match status" value="1"/>
</dbReference>
<dbReference type="PANTHER" id="PTHR10381:SF70">
    <property type="entry name" value="ATP-DEPENDENT CLP PROTEASE PROTEOLYTIC SUBUNIT"/>
    <property type="match status" value="1"/>
</dbReference>
<dbReference type="Pfam" id="PF00574">
    <property type="entry name" value="CLP_protease"/>
    <property type="match status" value="1"/>
</dbReference>
<dbReference type="PRINTS" id="PR00127">
    <property type="entry name" value="CLPPROTEASEP"/>
</dbReference>
<dbReference type="SUPFAM" id="SSF52096">
    <property type="entry name" value="ClpP/crotonase"/>
    <property type="match status" value="1"/>
</dbReference>
<dbReference type="PROSITE" id="PS00382">
    <property type="entry name" value="CLP_PROTEASE_HIS"/>
    <property type="match status" value="1"/>
</dbReference>
<dbReference type="PROSITE" id="PS00381">
    <property type="entry name" value="CLP_PROTEASE_SER"/>
    <property type="match status" value="1"/>
</dbReference>
<reference key="1">
    <citation type="journal article" date="2008" name="Genome Biol.">
        <title>Encapsulated in silica: genome, proteome and physiology of the thermophilic bacterium Anoxybacillus flavithermus WK1.</title>
        <authorList>
            <person name="Saw J.H."/>
            <person name="Mountain B.W."/>
            <person name="Feng L."/>
            <person name="Omelchenko M.V."/>
            <person name="Hou S."/>
            <person name="Saito J.A."/>
            <person name="Stott M.B."/>
            <person name="Li D."/>
            <person name="Zhao G."/>
            <person name="Wu J."/>
            <person name="Galperin M.Y."/>
            <person name="Koonin E.V."/>
            <person name="Makarova K.S."/>
            <person name="Wolf Y.I."/>
            <person name="Rigden D.J."/>
            <person name="Dunfield P.F."/>
            <person name="Wang L."/>
            <person name="Alam M."/>
        </authorList>
    </citation>
    <scope>NUCLEOTIDE SEQUENCE [LARGE SCALE GENOMIC DNA]</scope>
    <source>
        <strain>DSM 21510 / WK1</strain>
    </source>
</reference>
<proteinExistence type="inferred from homology"/>
<feature type="chain" id="PRO_1000189632" description="ATP-dependent Clp protease proteolytic subunit">
    <location>
        <begin position="1"/>
        <end position="196"/>
    </location>
</feature>
<feature type="active site" description="Nucleophile" evidence="1">
    <location>
        <position position="98"/>
    </location>
</feature>
<feature type="active site" evidence="1">
    <location>
        <position position="123"/>
    </location>
</feature>
<name>CLPP_ANOFW</name>
<protein>
    <recommendedName>
        <fullName evidence="1">ATP-dependent Clp protease proteolytic subunit</fullName>
        <ecNumber evidence="1">3.4.21.92</ecNumber>
    </recommendedName>
    <alternativeName>
        <fullName evidence="1">Endopeptidase Clp</fullName>
    </alternativeName>
</protein>
<comment type="function">
    <text evidence="1">Cleaves peptides in various proteins in a process that requires ATP hydrolysis. Has a chymotrypsin-like activity. Plays a major role in the degradation of misfolded proteins.</text>
</comment>
<comment type="catalytic activity">
    <reaction evidence="1">
        <text>Hydrolysis of proteins to small peptides in the presence of ATP and magnesium. alpha-casein is the usual test substrate. In the absence of ATP, only oligopeptides shorter than five residues are hydrolyzed (such as succinyl-Leu-Tyr-|-NHMec, and Leu-Tyr-Leu-|-Tyr-Trp, in which cleavage of the -Tyr-|-Leu- and -Tyr-|-Trp bonds also occurs).</text>
        <dbReference type="EC" id="3.4.21.92"/>
    </reaction>
</comment>
<comment type="subunit">
    <text evidence="1">Fourteen ClpP subunits assemble into 2 heptameric rings which stack back to back to give a disk-like structure with a central cavity, resembling the structure of eukaryotic proteasomes.</text>
</comment>
<comment type="subcellular location">
    <subcellularLocation>
        <location evidence="1">Cytoplasm</location>
    </subcellularLocation>
</comment>
<comment type="similarity">
    <text evidence="1">Belongs to the peptidase S14 family.</text>
</comment>
<sequence length="196" mass="21611">MNLIPTVIEQTSRGERAYDIYSRLLKDRIIILGSPIDDHVANSIVSQLLFLAAEDPEKDISLYINSPGGSITAGMAIYDTMQFIKPDVSTICIGMAASMGAFLLAAGAKGKRFALPNSEIMIHQPLGGVQGQATEIEIAAKRILFLRDKLNRILSENTGQPIEVIERDTDRDNFMTAEKAKEYGLIDRVLTRVDEK</sequence>
<keyword id="KW-0963">Cytoplasm</keyword>
<keyword id="KW-0378">Hydrolase</keyword>
<keyword id="KW-0645">Protease</keyword>
<keyword id="KW-0720">Serine protease</keyword>
<gene>
    <name evidence="1" type="primary">clpP</name>
    <name type="ordered locus">Aflv_2522</name>
</gene>
<organism>
    <name type="scientific">Anoxybacillus flavithermus (strain DSM 21510 / WK1)</name>
    <dbReference type="NCBI Taxonomy" id="491915"/>
    <lineage>
        <taxon>Bacteria</taxon>
        <taxon>Bacillati</taxon>
        <taxon>Bacillota</taxon>
        <taxon>Bacilli</taxon>
        <taxon>Bacillales</taxon>
        <taxon>Anoxybacillaceae</taxon>
        <taxon>Anoxybacillus</taxon>
    </lineage>
</organism>
<accession>B7GL34</accession>